<protein>
    <recommendedName>
        <fullName evidence="1">Photosystem II D2 protein</fullName>
        <shortName evidence="1">PSII D2 protein</shortName>
        <ecNumber evidence="1">1.10.3.9</ecNumber>
    </recommendedName>
    <alternativeName>
        <fullName evidence="1">Photosystem Q(A) protein</fullName>
    </alternativeName>
</protein>
<proteinExistence type="inferred from homology"/>
<geneLocation type="chloroplast"/>
<reference key="1">
    <citation type="submission" date="2003-11" db="EMBL/GenBank/DDBJ databases">
        <title>Whole genome sequence of Porphyra yezoensis chloroplast.</title>
        <authorList>
            <person name="Kunimoto M."/>
            <person name="Morishima K."/>
            <person name="Yoshikawa M."/>
            <person name="Fukuda S."/>
            <person name="Kobayashi T."/>
            <person name="Kobayashi M."/>
            <person name="Okazaki T."/>
            <person name="Ohara I."/>
            <person name="Nakayama I."/>
        </authorList>
    </citation>
    <scope>NUCLEOTIDE SEQUENCE [LARGE SCALE GENOMIC DNA]</scope>
    <source>
        <strain>U-51</strain>
    </source>
</reference>
<sequence>MTIAIGQEKTRGGFDLVDDWLKRDRFVFVGWSGLLLFPCAYLAVGGWLTGTTFVTSWYTHGLASSYLEGCNFLTAAVSTPANSMGHSLLFLWGPEAQGDFTRWCQIGGLWAFIALHGSFGLIGFCLRQFEIARLVGLRPYNAIAFSGPIAVFVSVFLMYPLGQASWFFAPSLGVAAIFRFLLFLQGFHNWTLNPFHMMGVAGILGGALLCAIHGATVQNTLFEDGDAADTFRAFTPTQSEETYSMVTANRFWSQIFGVAFSNKRWLHFFMLFVPVTGLWTSAFGIVGLALNLRAYDFVSQELRAAEDPEFETFYTKIILXDEGIRSWMAAQDQPHENFIFPEEVLPRGNAL</sequence>
<organism>
    <name type="scientific">Pyropia yezoensis</name>
    <name type="common">Susabi-nori</name>
    <name type="synonym">Porphyra yezoensis</name>
    <dbReference type="NCBI Taxonomy" id="2788"/>
    <lineage>
        <taxon>Eukaryota</taxon>
        <taxon>Rhodophyta</taxon>
        <taxon>Bangiophyceae</taxon>
        <taxon>Bangiales</taxon>
        <taxon>Bangiaceae</taxon>
        <taxon>Pyropia</taxon>
    </lineage>
</organism>
<feature type="chain" id="PRO_0000277322" description="Photosystem II D2 protein">
    <location>
        <begin position="1"/>
        <end position="351"/>
    </location>
</feature>
<feature type="transmembrane region" description="Helical" evidence="1">
    <location>
        <begin position="39"/>
        <end position="59"/>
    </location>
</feature>
<feature type="transmembrane region" description="Helical" evidence="1">
    <location>
        <begin position="123"/>
        <end position="139"/>
    </location>
</feature>
<feature type="transmembrane region" description="Helical" evidence="1">
    <location>
        <begin position="151"/>
        <end position="164"/>
    </location>
</feature>
<feature type="transmembrane region" description="Helical" evidence="1">
    <location>
        <begin position="206"/>
        <end position="226"/>
    </location>
</feature>
<feature type="transmembrane region" description="Helical" evidence="1">
    <location>
        <begin position="277"/>
        <end position="293"/>
    </location>
</feature>
<feature type="binding site" description="axial binding residue" evidence="1">
    <location>
        <position position="116"/>
    </location>
    <ligand>
        <name>chlorophyll a</name>
        <dbReference type="ChEBI" id="CHEBI:58416"/>
        <label>ChlzD2</label>
    </ligand>
    <ligandPart>
        <name>Mg</name>
        <dbReference type="ChEBI" id="CHEBI:25107"/>
    </ligandPart>
</feature>
<feature type="binding site" evidence="1">
    <location>
        <position position="128"/>
    </location>
    <ligand>
        <name>pheophytin a</name>
        <dbReference type="ChEBI" id="CHEBI:136840"/>
        <label>D2</label>
    </ligand>
</feature>
<feature type="binding site" evidence="1">
    <location>
        <position position="141"/>
    </location>
    <ligand>
        <name>pheophytin a</name>
        <dbReference type="ChEBI" id="CHEBI:136840"/>
        <label>D2</label>
    </ligand>
</feature>
<feature type="binding site" description="axial binding residue" evidence="1">
    <location>
        <position position="196"/>
    </location>
    <ligand>
        <name>chlorophyll a</name>
        <dbReference type="ChEBI" id="CHEBI:58416"/>
        <label>PD2</label>
    </ligand>
    <ligandPart>
        <name>Mg</name>
        <dbReference type="ChEBI" id="CHEBI:25107"/>
    </ligandPart>
</feature>
<feature type="binding site" evidence="1">
    <location>
        <position position="213"/>
    </location>
    <ligand>
        <name>a plastoquinone</name>
        <dbReference type="ChEBI" id="CHEBI:17757"/>
        <label>Q(A)</label>
    </ligand>
</feature>
<feature type="binding site" evidence="1">
    <location>
        <position position="213"/>
    </location>
    <ligand>
        <name>Fe cation</name>
        <dbReference type="ChEBI" id="CHEBI:24875"/>
        <note>ligand shared with heterodimeric partner</note>
    </ligand>
</feature>
<feature type="binding site" evidence="1">
    <location>
        <position position="260"/>
    </location>
    <ligand>
        <name>a plastoquinone</name>
        <dbReference type="ChEBI" id="CHEBI:17757"/>
        <label>Q(A)</label>
    </ligand>
</feature>
<feature type="binding site" evidence="1">
    <location>
        <position position="267"/>
    </location>
    <ligand>
        <name>Fe cation</name>
        <dbReference type="ChEBI" id="CHEBI:24875"/>
        <note>ligand shared with heterodimeric partner</note>
    </ligand>
</feature>
<name>PSBD_PYRYE</name>
<gene>
    <name evidence="1" type="primary">psbD</name>
</gene>
<evidence type="ECO:0000255" key="1">
    <source>
        <dbReference type="HAMAP-Rule" id="MF_01383"/>
    </source>
</evidence>
<evidence type="ECO:0000305" key="2"/>
<dbReference type="EC" id="1.10.3.9" evidence="1"/>
<dbReference type="EMBL" id="AP006715">
    <property type="protein sequence ID" value="BAE92481.1"/>
    <property type="status" value="ALT_FRAME"/>
    <property type="molecule type" value="Genomic_DNA"/>
</dbReference>
<dbReference type="RefSeq" id="YP_537038.1">
    <property type="nucleotide sequence ID" value="NC_007932.1"/>
</dbReference>
<dbReference type="GeneID" id="3978779"/>
<dbReference type="GO" id="GO:0009535">
    <property type="term" value="C:chloroplast thylakoid membrane"/>
    <property type="evidence" value="ECO:0007669"/>
    <property type="project" value="UniProtKB-SubCell"/>
</dbReference>
<dbReference type="GO" id="GO:0009523">
    <property type="term" value="C:photosystem II"/>
    <property type="evidence" value="ECO:0007669"/>
    <property type="project" value="UniProtKB-KW"/>
</dbReference>
<dbReference type="GO" id="GO:0016168">
    <property type="term" value="F:chlorophyll binding"/>
    <property type="evidence" value="ECO:0007669"/>
    <property type="project" value="UniProtKB-UniRule"/>
</dbReference>
<dbReference type="GO" id="GO:0045156">
    <property type="term" value="F:electron transporter, transferring electrons within the cyclic electron transport pathway of photosynthesis activity"/>
    <property type="evidence" value="ECO:0007669"/>
    <property type="project" value="InterPro"/>
</dbReference>
<dbReference type="GO" id="GO:0005506">
    <property type="term" value="F:iron ion binding"/>
    <property type="evidence" value="ECO:0007669"/>
    <property type="project" value="UniProtKB-UniRule"/>
</dbReference>
<dbReference type="GO" id="GO:0016491">
    <property type="term" value="F:oxidoreductase activity"/>
    <property type="evidence" value="ECO:0007669"/>
    <property type="project" value="UniProtKB-KW"/>
</dbReference>
<dbReference type="GO" id="GO:0009772">
    <property type="term" value="P:photosynthetic electron transport in photosystem II"/>
    <property type="evidence" value="ECO:0007669"/>
    <property type="project" value="InterPro"/>
</dbReference>
<dbReference type="CDD" id="cd09288">
    <property type="entry name" value="Photosystem-II_D2"/>
    <property type="match status" value="1"/>
</dbReference>
<dbReference type="FunFam" id="1.20.85.10:FF:000001">
    <property type="entry name" value="photosystem II D2 protein-like"/>
    <property type="match status" value="1"/>
</dbReference>
<dbReference type="Gene3D" id="1.20.85.10">
    <property type="entry name" value="Photosystem II protein D1-like"/>
    <property type="match status" value="1"/>
</dbReference>
<dbReference type="HAMAP" id="MF_01383">
    <property type="entry name" value="PSII_PsbD_D2"/>
    <property type="match status" value="1"/>
</dbReference>
<dbReference type="InterPro" id="IPR055266">
    <property type="entry name" value="D1/D2"/>
</dbReference>
<dbReference type="InterPro" id="IPR036854">
    <property type="entry name" value="Photo_II_D1/D2_sf"/>
</dbReference>
<dbReference type="InterPro" id="IPR000484">
    <property type="entry name" value="Photo_RC_L/M"/>
</dbReference>
<dbReference type="InterPro" id="IPR055265">
    <property type="entry name" value="Photo_RC_L/M_CS"/>
</dbReference>
<dbReference type="InterPro" id="IPR005868">
    <property type="entry name" value="PSII_PsbD/D2"/>
</dbReference>
<dbReference type="NCBIfam" id="TIGR01152">
    <property type="entry name" value="psbD"/>
    <property type="match status" value="1"/>
</dbReference>
<dbReference type="PANTHER" id="PTHR33149:SF12">
    <property type="entry name" value="PHOTOSYSTEM II D2 PROTEIN"/>
    <property type="match status" value="1"/>
</dbReference>
<dbReference type="PANTHER" id="PTHR33149">
    <property type="entry name" value="PHOTOSYSTEM II PROTEIN D1"/>
    <property type="match status" value="1"/>
</dbReference>
<dbReference type="Pfam" id="PF00124">
    <property type="entry name" value="Photo_RC"/>
    <property type="match status" value="1"/>
</dbReference>
<dbReference type="PRINTS" id="PR00256">
    <property type="entry name" value="REACTNCENTRE"/>
</dbReference>
<dbReference type="SUPFAM" id="SSF81483">
    <property type="entry name" value="Bacterial photosystem II reaction centre, L and M subunits"/>
    <property type="match status" value="1"/>
</dbReference>
<dbReference type="PROSITE" id="PS00244">
    <property type="entry name" value="REACTION_CENTER"/>
    <property type="match status" value="1"/>
</dbReference>
<comment type="function">
    <text evidence="1">Photosystem II (PSII) is a light-driven water:plastoquinone oxidoreductase that uses light energy to abstract electrons from H(2)O, generating O(2) and a proton gradient subsequently used for ATP formation. It consists of a core antenna complex that captures photons, and an electron transfer chain that converts photonic excitation into a charge separation. The D1/D2 (PsbA/PsbD) reaction center heterodimer binds P680, the primary electron donor of PSII as well as several subsequent electron acceptors. D2 is needed for assembly of a stable PSII complex.</text>
</comment>
<comment type="catalytic activity">
    <reaction evidence="1">
        <text>2 a plastoquinone + 4 hnu + 2 H2O = 2 a plastoquinol + O2</text>
        <dbReference type="Rhea" id="RHEA:36359"/>
        <dbReference type="Rhea" id="RHEA-COMP:9561"/>
        <dbReference type="Rhea" id="RHEA-COMP:9562"/>
        <dbReference type="ChEBI" id="CHEBI:15377"/>
        <dbReference type="ChEBI" id="CHEBI:15379"/>
        <dbReference type="ChEBI" id="CHEBI:17757"/>
        <dbReference type="ChEBI" id="CHEBI:30212"/>
        <dbReference type="ChEBI" id="CHEBI:62192"/>
        <dbReference type="EC" id="1.10.3.9"/>
    </reaction>
</comment>
<comment type="cofactor">
    <text evidence="1">The D1/D2 heterodimer binds P680, chlorophylls that are the primary electron donor of PSII, and subsequent electron acceptors. It shares a non-heme iron and each subunit binds pheophytin, quinone, additional chlorophylls, carotenoids and lipids. There is also a Cl(-1) ion associated with D1 and D2, which is required for oxygen evolution. The PSII complex binds additional chlorophylls, carotenoids and specific lipids.</text>
</comment>
<comment type="subunit">
    <text evidence="1">PSII is composed of 1 copy each of membrane proteins PsbA, PsbB, PsbC, PsbD, PsbE, PsbF, PsbH, PsbI, PsbJ, PsbK, PsbL, PsbM, PsbT, PsbX, PsbY, PsbZ, Psb30/Ycf12, at least 3 peripheral proteins of the oxygen-evolving complex and a large number of cofactors. It forms dimeric complexes.</text>
</comment>
<comment type="subcellular location">
    <subcellularLocation>
        <location evidence="1">Plastid</location>
        <location evidence="1">Chloroplast thylakoid membrane</location>
        <topology evidence="1">Multi-pass membrane protein</topology>
    </subcellularLocation>
</comment>
<comment type="miscellaneous">
    <text evidence="1">2 of the reaction center chlorophylls (ChlD1 and ChlD2) are entirely coordinated by water.</text>
</comment>
<comment type="similarity">
    <text evidence="1">Belongs to the reaction center PufL/M/PsbA/D family.</text>
</comment>
<comment type="sequence caution" evidence="2">
    <conflict type="frameshift">
        <sequence resource="EMBL-CDS" id="BAE92481"/>
    </conflict>
</comment>
<keyword id="KW-0148">Chlorophyll</keyword>
<keyword id="KW-0150">Chloroplast</keyword>
<keyword id="KW-0157">Chromophore</keyword>
<keyword id="KW-0249">Electron transport</keyword>
<keyword id="KW-0408">Iron</keyword>
<keyword id="KW-0460">Magnesium</keyword>
<keyword id="KW-0472">Membrane</keyword>
<keyword id="KW-0479">Metal-binding</keyword>
<keyword id="KW-0560">Oxidoreductase</keyword>
<keyword id="KW-0602">Photosynthesis</keyword>
<keyword id="KW-0604">Photosystem II</keyword>
<keyword id="KW-0934">Plastid</keyword>
<keyword id="KW-0793">Thylakoid</keyword>
<keyword id="KW-0812">Transmembrane</keyword>
<keyword id="KW-1133">Transmembrane helix</keyword>
<keyword id="KW-0813">Transport</keyword>
<accession>Q1XDD0</accession>